<sequence>MKSPTKDSKLFHLKSNFAPTGDQPAAIAKLAEFQTNEQVLLGATGTGKTFTIANVIQKVQLPTVVIAHNKTLAGQLYQELKELFPNNAVEYFISYFDFYQPEAYLPAKGVYIEKSATVNEEIKRLRVSTLHSLSTRKDVIVVGSVASIYPTSSPADFAQYSLWLVVGKEYGLSELKTQLIHLNYVVNKQQLTPGKFRFQGDVVEVFPGYAQDYVLRLSFFDQQLEQIARIDPLTNKVLETLNSFKLGPADEYIVNQNDLGVALDTIKAELKDRLKYFERLNFPERAQRLQTITEHDLADLKAWGVCSGVENYARHLEHRPPHSKPYNIFDYFTKGEWLLVVDESHQTLPQIKGMYNTDISRKQSLIEYGFRLPSALDNRPLSYEEFRQGINKVIYVSATPREEEIQLSHNNVVEQLVRPTYLLDPEVIVKPKDNQVEDLVSEIINQRKHNGRTFVTVLTIKMAENLTDFLKERNIKVAYIHKDIKALERLILLTDLRKGEYECLVGINLLREGLDVPEVSLVAIFDADIPGLPRDERSLIQIIGRAARNVHGRVIMYANTISEQMDKAIKETQRRRTIQMAYNEQHHKTPMTVQKPITLNQPIKLKTKSSEQQKAALIKQLTKEMKQAAANQNYELAIEIRDSIFELEKQFRGKIKS</sequence>
<gene>
    <name evidence="1" type="primary">uvrB</name>
    <name type="ordered locus">MPN_211</name>
    <name type="ORF">MP620</name>
</gene>
<dbReference type="EMBL" id="U00089">
    <property type="protein sequence ID" value="AAB96268.1"/>
    <property type="molecule type" value="Genomic_DNA"/>
</dbReference>
<dbReference type="PIR" id="S73946">
    <property type="entry name" value="S73946"/>
</dbReference>
<dbReference type="RefSeq" id="NP_109899.1">
    <property type="nucleotide sequence ID" value="NC_000912.1"/>
</dbReference>
<dbReference type="RefSeq" id="WP_010874568.1">
    <property type="nucleotide sequence ID" value="NZ_OU342337.1"/>
</dbReference>
<dbReference type="SMR" id="P75558"/>
<dbReference type="IntAct" id="P75558">
    <property type="interactions" value="1"/>
</dbReference>
<dbReference type="STRING" id="272634.MPN_211"/>
<dbReference type="EnsemblBacteria" id="AAB96268">
    <property type="protein sequence ID" value="AAB96268"/>
    <property type="gene ID" value="MPN_211"/>
</dbReference>
<dbReference type="GeneID" id="66609143"/>
<dbReference type="KEGG" id="mpn:MPN_211"/>
<dbReference type="PATRIC" id="fig|272634.6.peg.230"/>
<dbReference type="HOGENOM" id="CLU_009621_2_1_14"/>
<dbReference type="OrthoDB" id="9806651at2"/>
<dbReference type="BioCyc" id="MPNE272634:G1GJ3-341-MONOMER"/>
<dbReference type="Proteomes" id="UP000000808">
    <property type="component" value="Chromosome"/>
</dbReference>
<dbReference type="GO" id="GO:0005737">
    <property type="term" value="C:cytoplasm"/>
    <property type="evidence" value="ECO:0007669"/>
    <property type="project" value="UniProtKB-SubCell"/>
</dbReference>
<dbReference type="GO" id="GO:0009380">
    <property type="term" value="C:excinuclease repair complex"/>
    <property type="evidence" value="ECO:0007669"/>
    <property type="project" value="InterPro"/>
</dbReference>
<dbReference type="GO" id="GO:0005524">
    <property type="term" value="F:ATP binding"/>
    <property type="evidence" value="ECO:0007669"/>
    <property type="project" value="UniProtKB-UniRule"/>
</dbReference>
<dbReference type="GO" id="GO:0016887">
    <property type="term" value="F:ATP hydrolysis activity"/>
    <property type="evidence" value="ECO:0007669"/>
    <property type="project" value="InterPro"/>
</dbReference>
<dbReference type="GO" id="GO:0003677">
    <property type="term" value="F:DNA binding"/>
    <property type="evidence" value="ECO:0007669"/>
    <property type="project" value="UniProtKB-UniRule"/>
</dbReference>
<dbReference type="GO" id="GO:0009381">
    <property type="term" value="F:excinuclease ABC activity"/>
    <property type="evidence" value="ECO:0007669"/>
    <property type="project" value="UniProtKB-UniRule"/>
</dbReference>
<dbReference type="GO" id="GO:0006289">
    <property type="term" value="P:nucleotide-excision repair"/>
    <property type="evidence" value="ECO:0007669"/>
    <property type="project" value="UniProtKB-UniRule"/>
</dbReference>
<dbReference type="GO" id="GO:0009432">
    <property type="term" value="P:SOS response"/>
    <property type="evidence" value="ECO:0007669"/>
    <property type="project" value="UniProtKB-UniRule"/>
</dbReference>
<dbReference type="CDD" id="cd17916">
    <property type="entry name" value="DEXHc_UvrB"/>
    <property type="match status" value="1"/>
</dbReference>
<dbReference type="CDD" id="cd18790">
    <property type="entry name" value="SF2_C_UvrB"/>
    <property type="match status" value="1"/>
</dbReference>
<dbReference type="Gene3D" id="3.40.50.300">
    <property type="entry name" value="P-loop containing nucleotide triphosphate hydrolases"/>
    <property type="match status" value="3"/>
</dbReference>
<dbReference type="Gene3D" id="4.10.860.10">
    <property type="entry name" value="UVR domain"/>
    <property type="match status" value="1"/>
</dbReference>
<dbReference type="HAMAP" id="MF_00204">
    <property type="entry name" value="UvrB"/>
    <property type="match status" value="1"/>
</dbReference>
<dbReference type="InterPro" id="IPR006935">
    <property type="entry name" value="Helicase/UvrB_N"/>
</dbReference>
<dbReference type="InterPro" id="IPR014001">
    <property type="entry name" value="Helicase_ATP-bd"/>
</dbReference>
<dbReference type="InterPro" id="IPR001650">
    <property type="entry name" value="Helicase_C-like"/>
</dbReference>
<dbReference type="InterPro" id="IPR027417">
    <property type="entry name" value="P-loop_NTPase"/>
</dbReference>
<dbReference type="InterPro" id="IPR001943">
    <property type="entry name" value="UVR_dom"/>
</dbReference>
<dbReference type="InterPro" id="IPR036876">
    <property type="entry name" value="UVR_dom_sf"/>
</dbReference>
<dbReference type="InterPro" id="IPR004807">
    <property type="entry name" value="UvrB"/>
</dbReference>
<dbReference type="InterPro" id="IPR041471">
    <property type="entry name" value="UvrB_inter"/>
</dbReference>
<dbReference type="InterPro" id="IPR024759">
    <property type="entry name" value="UvrB_YAD/RRR_dom"/>
</dbReference>
<dbReference type="NCBIfam" id="NF003673">
    <property type="entry name" value="PRK05298.1"/>
    <property type="match status" value="1"/>
</dbReference>
<dbReference type="NCBIfam" id="TIGR00631">
    <property type="entry name" value="uvrb"/>
    <property type="match status" value="1"/>
</dbReference>
<dbReference type="PANTHER" id="PTHR24029">
    <property type="entry name" value="UVRABC SYSTEM PROTEIN B"/>
    <property type="match status" value="1"/>
</dbReference>
<dbReference type="PANTHER" id="PTHR24029:SF0">
    <property type="entry name" value="UVRABC SYSTEM PROTEIN B"/>
    <property type="match status" value="1"/>
</dbReference>
<dbReference type="Pfam" id="PF00271">
    <property type="entry name" value="Helicase_C"/>
    <property type="match status" value="1"/>
</dbReference>
<dbReference type="Pfam" id="PF04851">
    <property type="entry name" value="ResIII"/>
    <property type="match status" value="1"/>
</dbReference>
<dbReference type="Pfam" id="PF02151">
    <property type="entry name" value="UVR"/>
    <property type="match status" value="1"/>
</dbReference>
<dbReference type="Pfam" id="PF12344">
    <property type="entry name" value="UvrB"/>
    <property type="match status" value="1"/>
</dbReference>
<dbReference type="Pfam" id="PF17757">
    <property type="entry name" value="UvrB_inter"/>
    <property type="match status" value="1"/>
</dbReference>
<dbReference type="SMART" id="SM00487">
    <property type="entry name" value="DEXDc"/>
    <property type="match status" value="1"/>
</dbReference>
<dbReference type="SMART" id="SM00490">
    <property type="entry name" value="HELICc"/>
    <property type="match status" value="1"/>
</dbReference>
<dbReference type="SUPFAM" id="SSF46600">
    <property type="entry name" value="C-terminal UvrC-binding domain of UvrB"/>
    <property type="match status" value="1"/>
</dbReference>
<dbReference type="SUPFAM" id="SSF52540">
    <property type="entry name" value="P-loop containing nucleoside triphosphate hydrolases"/>
    <property type="match status" value="2"/>
</dbReference>
<dbReference type="PROSITE" id="PS51192">
    <property type="entry name" value="HELICASE_ATP_BIND_1"/>
    <property type="match status" value="1"/>
</dbReference>
<dbReference type="PROSITE" id="PS51194">
    <property type="entry name" value="HELICASE_CTER"/>
    <property type="match status" value="1"/>
</dbReference>
<dbReference type="PROSITE" id="PS50151">
    <property type="entry name" value="UVR"/>
    <property type="match status" value="1"/>
</dbReference>
<organism>
    <name type="scientific">Mycoplasma pneumoniae (strain ATCC 29342 / M129 / Subtype 1)</name>
    <name type="common">Mycoplasmoides pneumoniae</name>
    <dbReference type="NCBI Taxonomy" id="272634"/>
    <lineage>
        <taxon>Bacteria</taxon>
        <taxon>Bacillati</taxon>
        <taxon>Mycoplasmatota</taxon>
        <taxon>Mycoplasmoidales</taxon>
        <taxon>Mycoplasmoidaceae</taxon>
        <taxon>Mycoplasmoides</taxon>
    </lineage>
</organism>
<proteinExistence type="inferred from homology"/>
<comment type="function">
    <text evidence="1">The UvrABC repair system catalyzes the recognition and processing of DNA lesions. A damage recognition complex composed of 2 UvrA and 2 UvrB subunits scans DNA for abnormalities. Upon binding of the UvrA(2)B(2) complex to a putative damaged site, the DNA wraps around one UvrB monomer. DNA wrap is dependent on ATP binding by UvrB and probably causes local melting of the DNA helix, facilitating insertion of UvrB beta-hairpin between the DNA strands. Then UvrB probes one DNA strand for the presence of a lesion. If a lesion is found the UvrA subunits dissociate and the UvrB-DNA preincision complex is formed. This complex is subsequently bound by UvrC and the second UvrB is released. If no lesion is found, the DNA wraps around the other UvrB subunit that will check the other stand for damage.</text>
</comment>
<comment type="subunit">
    <text evidence="1">Forms a heterotetramer with UvrA during the search for lesions. Interacts with UvrC in an incision complex.</text>
</comment>
<comment type="subcellular location">
    <subcellularLocation>
        <location evidence="1">Cytoplasm</location>
    </subcellularLocation>
</comment>
<comment type="domain">
    <text evidence="1">The beta-hairpin motif is involved in DNA binding.</text>
</comment>
<comment type="similarity">
    <text evidence="1">Belongs to the UvrB family.</text>
</comment>
<keyword id="KW-0067">ATP-binding</keyword>
<keyword id="KW-0963">Cytoplasm</keyword>
<keyword id="KW-0227">DNA damage</keyword>
<keyword id="KW-0228">DNA excision</keyword>
<keyword id="KW-0234">DNA repair</keyword>
<keyword id="KW-0267">Excision nuclease</keyword>
<keyword id="KW-0547">Nucleotide-binding</keyword>
<keyword id="KW-1185">Reference proteome</keyword>
<keyword id="KW-0742">SOS response</keyword>
<name>UVRB_MYCPN</name>
<accession>P75558</accession>
<feature type="chain" id="PRO_0000138409" description="UvrABC system protein B">
    <location>
        <begin position="1"/>
        <end position="657"/>
    </location>
</feature>
<feature type="domain" description="Helicase ATP-binding" evidence="1">
    <location>
        <begin position="29"/>
        <end position="416"/>
    </location>
</feature>
<feature type="domain" description="Helicase C-terminal" evidence="1">
    <location>
        <begin position="435"/>
        <end position="597"/>
    </location>
</feature>
<feature type="domain" description="UVR" evidence="1">
    <location>
        <begin position="615"/>
        <end position="650"/>
    </location>
</feature>
<feature type="short sequence motif" description="Beta-hairpin">
    <location>
        <begin position="95"/>
        <end position="118"/>
    </location>
</feature>
<feature type="binding site" evidence="1">
    <location>
        <begin position="42"/>
        <end position="49"/>
    </location>
    <ligand>
        <name>ATP</name>
        <dbReference type="ChEBI" id="CHEBI:30616"/>
    </ligand>
</feature>
<protein>
    <recommendedName>
        <fullName evidence="1">UvrABC system protein B</fullName>
        <shortName evidence="1">Protein UvrB</shortName>
    </recommendedName>
    <alternativeName>
        <fullName evidence="1">Excinuclease ABC subunit B</fullName>
    </alternativeName>
</protein>
<reference key="1">
    <citation type="journal article" date="1996" name="Nucleic Acids Res.">
        <title>Complete sequence analysis of the genome of the bacterium Mycoplasma pneumoniae.</title>
        <authorList>
            <person name="Himmelreich R."/>
            <person name="Hilbert H."/>
            <person name="Plagens H."/>
            <person name="Pirkl E."/>
            <person name="Li B.-C."/>
            <person name="Herrmann R."/>
        </authorList>
    </citation>
    <scope>NUCLEOTIDE SEQUENCE [LARGE SCALE GENOMIC DNA]</scope>
    <source>
        <strain>ATCC 29342 / M129 / Subtype 1</strain>
    </source>
</reference>
<evidence type="ECO:0000255" key="1">
    <source>
        <dbReference type="HAMAP-Rule" id="MF_00204"/>
    </source>
</evidence>